<reference key="1">
    <citation type="journal article" date="2002" name="Biosci. Biotechnol. Biochem.">
        <title>Molecular cloning of the gene encoding thermostable endo-1,5-alpha-L-arabinase of Bacillus thermodenitrificans TS-3 and its expression in Bacillus subtilis.</title>
        <authorList>
            <person name="Takao M."/>
            <person name="Yamaguchi A."/>
            <person name="Yoshikawa K."/>
            <person name="Terashita T."/>
            <person name="Sakai T."/>
        </authorList>
    </citation>
    <scope>NUCLEOTIDE SEQUENCE [GENOMIC DNA]</scope>
    <scope>PROTEIN SEQUENCE OF 2-21</scope>
    <scope>FUNCTION</scope>
    <scope>BIOPHYSICOCHEMICAL PROPERTIES</scope>
    <source>
        <strain>TS-3</strain>
    </source>
</reference>
<reference key="2">
    <citation type="journal article" date="2005" name="J. Biochem.">
        <title>Structural basis for thermostability of endo-1,5-alpha-L-arabinanase from Bacillus thermodenitrificans TS-3.</title>
        <authorList>
            <person name="Yamaguchi A."/>
            <person name="Tada T."/>
            <person name="Wada K."/>
            <person name="Nakaniwa T."/>
            <person name="Kitatani T."/>
            <person name="Sogabe Y."/>
            <person name="Takao M."/>
            <person name="Sakai T."/>
            <person name="Nishimura K."/>
        </authorList>
    </citation>
    <scope>X-RAY CRYSTALLOGRAPHY (1.90 ANGSTROMS) OF 2-313 IN COMPLEX WITH CALCIUM ION</scope>
    <scope>MUTAGENESIS</scope>
    <scope>COFACTOR</scope>
    <scope>THERMOSTABILITY</scope>
</reference>
<proteinExistence type="evidence at protein level"/>
<protein>
    <recommendedName>
        <fullName>Intracellular endo-alpha-(1-&gt;5)-L-arabinanase</fullName>
        <shortName>ABN</shortName>
        <ecNumber>3.2.1.99</ecNumber>
    </recommendedName>
    <alternativeName>
        <fullName>Endo-1,5-alpha-L-arabinanase</fullName>
    </alternativeName>
</protein>
<gene>
    <name type="primary">abn-ts</name>
</gene>
<organism>
    <name type="scientific">Geobacillus thermodenitrificans</name>
    <dbReference type="NCBI Taxonomy" id="33940"/>
    <lineage>
        <taxon>Bacteria</taxon>
        <taxon>Bacillati</taxon>
        <taxon>Bacillota</taxon>
        <taxon>Bacilli</taxon>
        <taxon>Bacillales</taxon>
        <taxon>Anoxybacillaceae</taxon>
        <taxon>Geobacillus</taxon>
    </lineage>
</organism>
<comment type="function">
    <text evidence="3">Involved in the degradation of arabinan and is a key enzyme in the complete degradation of the plant cell wall. Catalyzes the cleavage of endo alpha-(1-&gt;5)-L-arabinofuranosyl residues in debranched arabinan.</text>
</comment>
<comment type="catalytic activity">
    <reaction>
        <text>Endohydrolysis of (1-&gt;5)-alpha-arabinofuranosidic linkages in (1-&gt;5)-arabinans.</text>
        <dbReference type="EC" id="3.2.1.99"/>
    </reaction>
</comment>
<comment type="cofactor">
    <cofactor evidence="5">
        <name>Ca(2+)</name>
        <dbReference type="ChEBI" id="CHEBI:29108"/>
    </cofactor>
    <text evidence="5">Binds 1 Ca(2+) ion per subunit.</text>
</comment>
<comment type="biophysicochemical properties">
    <temperatureDependence>
        <text evidence="3">Optimum temperature is 70 degrees Celsius. The enzyme is stable for 30 minutes at temperatures up to 70 degrees Celsius.</text>
    </temperatureDependence>
</comment>
<comment type="pathway">
    <text>Glycan metabolism; L-arabinan degradation.</text>
</comment>
<comment type="subunit">
    <text evidence="1">Monomer.</text>
</comment>
<comment type="subcellular location">
    <subcellularLocation>
        <location evidence="1">Cytoplasm</location>
    </subcellularLocation>
</comment>
<comment type="miscellaneous">
    <text evidence="6">The N-terminal 16 amino acids plays an important role in the thermostability.</text>
</comment>
<comment type="similarity">
    <text evidence="5">Belongs to the glycosyl hydrolase 43 family.</text>
</comment>
<sequence length="313" mass="35457">MVHFHPFGNVNFYEMDWSLKGDLWAHDPVIAKEGSRWYVFHTGSGIQIKTSEDGVHWENMGRVFPSLPDWCKQYVPEKDEDHLWAPDICFYNGIYYLYYSVSTFGKNTSVIGLATNRTLDPRDPDYEWKDMGPVIHSTASDNYNAIDPNVVFDQEGQPWLSFGSFWSGIQLIQLDTETMKPAAQAELLTIASRGEEPNAIEAPFIVCRNGYYYLFVSFDFCCRGIESTYKIAVGRSKDITGPYVDKNGVSMMQGGGTILDAGNDRWIGPGHCAVYFSGVSAILVNHAYDALKNGEPTLQIRPLYWDDEGWPYL</sequence>
<feature type="chain" id="PRO_0000422130" description="Intracellular endo-alpha-(1-&gt;5)-L-arabinanase">
    <location>
        <begin position="1"/>
        <end position="313"/>
    </location>
</feature>
<feature type="active site" description="Proton acceptor" evidence="6">
    <location>
        <position position="27"/>
    </location>
</feature>
<feature type="active site" description="Proton donor" evidence="6">
    <location>
        <position position="201"/>
    </location>
</feature>
<feature type="binding site" evidence="1">
    <location>
        <position position="27"/>
    </location>
    <ligand>
        <name>substrate</name>
    </ligand>
</feature>
<feature type="binding site">
    <location>
        <position position="105"/>
    </location>
    <ligand>
        <name>substrate</name>
    </ligand>
</feature>
<feature type="binding site" evidence="1">
    <location>
        <begin position="144"/>
        <end position="147"/>
    </location>
    <ligand>
        <name>substrate</name>
    </ligand>
</feature>
<feature type="binding site" evidence="1">
    <location>
        <begin position="164"/>
        <end position="166"/>
    </location>
    <ligand>
        <name>substrate</name>
    </ligand>
</feature>
<feature type="binding site" evidence="2">
    <location>
        <position position="271"/>
    </location>
    <ligand>
        <name>Ca(2+)</name>
        <dbReference type="ChEBI" id="CHEBI:29108"/>
    </ligand>
</feature>
<feature type="site" description="Important for catalytic activity, responsible for pKa modulation of the active site Glu and correct orientation of both the proton donor and substrate" evidence="6">
    <location>
        <position position="147"/>
    </location>
</feature>
<feature type="site" description="Important for substrate recognition" evidence="1">
    <location>
        <position position="271"/>
    </location>
</feature>
<feature type="mutagenesis site" description="No activity is found after 5 minutes at 70 degrees Celsius." evidence="4">
    <location>
        <begin position="2"/>
        <end position="17"/>
    </location>
</feature>
<feature type="turn" evidence="7">
    <location>
        <begin position="12"/>
        <end position="14"/>
    </location>
</feature>
<feature type="strand" evidence="7">
    <location>
        <begin position="29"/>
        <end position="33"/>
    </location>
</feature>
<feature type="strand" evidence="7">
    <location>
        <begin position="36"/>
        <end position="44"/>
    </location>
</feature>
<feature type="strand" evidence="7">
    <location>
        <begin position="46"/>
        <end position="63"/>
    </location>
</feature>
<feature type="helix" evidence="7">
    <location>
        <begin position="71"/>
        <end position="74"/>
    </location>
</feature>
<feature type="strand" evidence="7">
    <location>
        <begin position="82"/>
        <end position="91"/>
    </location>
</feature>
<feature type="strand" evidence="7">
    <location>
        <begin position="94"/>
        <end position="101"/>
    </location>
</feature>
<feature type="strand" evidence="7">
    <location>
        <begin position="109"/>
        <end position="117"/>
    </location>
</feature>
<feature type="strand" evidence="7">
    <location>
        <begin position="129"/>
        <end position="137"/>
    </location>
</feature>
<feature type="strand" evidence="7">
    <location>
        <begin position="141"/>
        <end position="143"/>
    </location>
</feature>
<feature type="strand" evidence="7">
    <location>
        <begin position="149"/>
        <end position="152"/>
    </location>
</feature>
<feature type="strand" evidence="7">
    <location>
        <begin position="158"/>
        <end position="162"/>
    </location>
</feature>
<feature type="strand" evidence="7">
    <location>
        <begin position="169"/>
        <end position="174"/>
    </location>
</feature>
<feature type="turn" evidence="7">
    <location>
        <begin position="176"/>
        <end position="178"/>
    </location>
</feature>
<feature type="strand" evidence="7">
    <location>
        <begin position="179"/>
        <end position="181"/>
    </location>
</feature>
<feature type="strand" evidence="7">
    <location>
        <begin position="188"/>
        <end position="191"/>
    </location>
</feature>
<feature type="strand" evidence="7">
    <location>
        <begin position="194"/>
        <end position="197"/>
    </location>
</feature>
<feature type="strand" evidence="7">
    <location>
        <begin position="200"/>
        <end position="208"/>
    </location>
</feature>
<feature type="strand" evidence="7">
    <location>
        <begin position="211"/>
        <end position="219"/>
    </location>
</feature>
<feature type="helix" evidence="7">
    <location>
        <begin position="224"/>
        <end position="226"/>
    </location>
</feature>
<feature type="strand" evidence="7">
    <location>
        <begin position="230"/>
        <end position="238"/>
    </location>
</feature>
<feature type="helix" evidence="7">
    <location>
        <begin position="251"/>
        <end position="253"/>
    </location>
</feature>
<feature type="strand" evidence="7">
    <location>
        <begin position="257"/>
        <end position="260"/>
    </location>
</feature>
<feature type="strand" evidence="7">
    <location>
        <begin position="264"/>
        <end position="277"/>
    </location>
</feature>
<feature type="strand" evidence="7">
    <location>
        <begin position="280"/>
        <end position="289"/>
    </location>
</feature>
<feature type="turn" evidence="7">
    <location>
        <begin position="290"/>
        <end position="294"/>
    </location>
</feature>
<feature type="strand" evidence="7">
    <location>
        <begin position="295"/>
        <end position="302"/>
    </location>
</feature>
<dbReference type="EC" id="3.2.1.99"/>
<dbReference type="EMBL" id="AB061269">
    <property type="protein sequence ID" value="BAB64339.1"/>
    <property type="molecule type" value="Genomic_DNA"/>
</dbReference>
<dbReference type="PIR" id="JC7817">
    <property type="entry name" value="JC7817"/>
</dbReference>
<dbReference type="PDB" id="1WL7">
    <property type="method" value="X-ray"/>
    <property type="resolution" value="1.90 A"/>
    <property type="chains" value="A=2-313"/>
</dbReference>
<dbReference type="PDB" id="6A8H">
    <property type="method" value="X-ray"/>
    <property type="resolution" value="1.65 A"/>
    <property type="chains" value="A=1-313"/>
</dbReference>
<dbReference type="PDB" id="6A8I">
    <property type="method" value="X-ray"/>
    <property type="resolution" value="1.90 A"/>
    <property type="chains" value="A/B=1-313"/>
</dbReference>
<dbReference type="PDBsum" id="1WL7"/>
<dbReference type="PDBsum" id="6A8H"/>
<dbReference type="PDBsum" id="6A8I"/>
<dbReference type="SMR" id="Q93HT9"/>
<dbReference type="CAZy" id="GH43">
    <property type="family name" value="Glycoside Hydrolase Family 43"/>
</dbReference>
<dbReference type="BRENDA" id="3.2.1.99">
    <property type="organism ID" value="705"/>
</dbReference>
<dbReference type="UniPathway" id="UPA00667"/>
<dbReference type="EvolutionaryTrace" id="Q93HT9"/>
<dbReference type="GO" id="GO:0005737">
    <property type="term" value="C:cytoplasm"/>
    <property type="evidence" value="ECO:0007669"/>
    <property type="project" value="UniProtKB-SubCell"/>
</dbReference>
<dbReference type="GO" id="GO:0046558">
    <property type="term" value="F:arabinan endo-1,5-alpha-L-arabinosidase activity"/>
    <property type="evidence" value="ECO:0007669"/>
    <property type="project" value="UniProtKB-EC"/>
</dbReference>
<dbReference type="GO" id="GO:0046872">
    <property type="term" value="F:metal ion binding"/>
    <property type="evidence" value="ECO:0007669"/>
    <property type="project" value="UniProtKB-KW"/>
</dbReference>
<dbReference type="GO" id="GO:0031222">
    <property type="term" value="P:arabinan catabolic process"/>
    <property type="evidence" value="ECO:0007669"/>
    <property type="project" value="UniProtKB-UniPathway"/>
</dbReference>
<dbReference type="CDD" id="cd08998">
    <property type="entry name" value="GH43_Arb43a-like"/>
    <property type="match status" value="1"/>
</dbReference>
<dbReference type="Gene3D" id="2.115.10.20">
    <property type="entry name" value="Glycosyl hydrolase domain, family 43"/>
    <property type="match status" value="1"/>
</dbReference>
<dbReference type="InterPro" id="IPR050727">
    <property type="entry name" value="GH43_arabinanases"/>
</dbReference>
<dbReference type="InterPro" id="IPR006710">
    <property type="entry name" value="Glyco_hydro_43"/>
</dbReference>
<dbReference type="InterPro" id="IPR016840">
    <property type="entry name" value="Glyco_hydro_43_endo_a_Ara-ase"/>
</dbReference>
<dbReference type="InterPro" id="IPR023296">
    <property type="entry name" value="Glyco_hydro_beta-prop_sf"/>
</dbReference>
<dbReference type="PANTHER" id="PTHR43301">
    <property type="entry name" value="ARABINAN ENDO-1,5-ALPHA-L-ARABINOSIDASE"/>
    <property type="match status" value="1"/>
</dbReference>
<dbReference type="PANTHER" id="PTHR43301:SF3">
    <property type="entry name" value="ARABINAN ENDO-1,5-ALPHA-L-ARABINOSIDASE A-RELATED"/>
    <property type="match status" value="1"/>
</dbReference>
<dbReference type="Pfam" id="PF04616">
    <property type="entry name" value="Glyco_hydro_43"/>
    <property type="match status" value="1"/>
</dbReference>
<dbReference type="PIRSF" id="PIRSF026534">
    <property type="entry name" value="Endo_alpha-L-arabinosidase"/>
    <property type="match status" value="1"/>
</dbReference>
<dbReference type="SUPFAM" id="SSF75005">
    <property type="entry name" value="Arabinanase/levansucrase/invertase"/>
    <property type="match status" value="1"/>
</dbReference>
<evidence type="ECO:0000250" key="1"/>
<evidence type="ECO:0000255" key="2"/>
<evidence type="ECO:0000269" key="3">
    <source>
    </source>
</evidence>
<evidence type="ECO:0000269" key="4">
    <source>
    </source>
</evidence>
<evidence type="ECO:0000305" key="5"/>
<evidence type="ECO:0000305" key="6">
    <source>
    </source>
</evidence>
<evidence type="ECO:0007829" key="7">
    <source>
        <dbReference type="PDB" id="6A8H"/>
    </source>
</evidence>
<name>IABN_GEOTD</name>
<keyword id="KW-0002">3D-structure</keyword>
<keyword id="KW-0106">Calcium</keyword>
<keyword id="KW-0119">Carbohydrate metabolism</keyword>
<keyword id="KW-0963">Cytoplasm</keyword>
<keyword id="KW-0903">Direct protein sequencing</keyword>
<keyword id="KW-0326">Glycosidase</keyword>
<keyword id="KW-0378">Hydrolase</keyword>
<keyword id="KW-0479">Metal-binding</keyword>
<accession>Q93HT9</accession>